<accession>Q88R68</accession>
<name>AGUA_PSEPK</name>
<reference key="1">
    <citation type="journal article" date="2002" name="Environ. Microbiol.">
        <title>Complete genome sequence and comparative analysis of the metabolically versatile Pseudomonas putida KT2440.</title>
        <authorList>
            <person name="Nelson K.E."/>
            <person name="Weinel C."/>
            <person name="Paulsen I.T."/>
            <person name="Dodson R.J."/>
            <person name="Hilbert H."/>
            <person name="Martins dos Santos V.A.P."/>
            <person name="Fouts D.E."/>
            <person name="Gill S.R."/>
            <person name="Pop M."/>
            <person name="Holmes M."/>
            <person name="Brinkac L.M."/>
            <person name="Beanan M.J."/>
            <person name="DeBoy R.T."/>
            <person name="Daugherty S.C."/>
            <person name="Kolonay J.F."/>
            <person name="Madupu R."/>
            <person name="Nelson W.C."/>
            <person name="White O."/>
            <person name="Peterson J.D."/>
            <person name="Khouri H.M."/>
            <person name="Hance I."/>
            <person name="Chris Lee P."/>
            <person name="Holtzapple E.K."/>
            <person name="Scanlan D."/>
            <person name="Tran K."/>
            <person name="Moazzez A."/>
            <person name="Utterback T.R."/>
            <person name="Rizzo M."/>
            <person name="Lee K."/>
            <person name="Kosack D."/>
            <person name="Moestl D."/>
            <person name="Wedler H."/>
            <person name="Lauber J."/>
            <person name="Stjepandic D."/>
            <person name="Hoheisel J."/>
            <person name="Straetz M."/>
            <person name="Heim S."/>
            <person name="Kiewitz C."/>
            <person name="Eisen J.A."/>
            <person name="Timmis K.N."/>
            <person name="Duesterhoeft A."/>
            <person name="Tuemmler B."/>
            <person name="Fraser C.M."/>
        </authorList>
    </citation>
    <scope>NUCLEOTIDE SEQUENCE [LARGE SCALE GENOMIC DNA]</scope>
    <source>
        <strain>ATCC 47054 / DSM 6125 / CFBP 8728 / NCIMB 11950 / KT2440</strain>
    </source>
</reference>
<dbReference type="EC" id="3.5.3.12" evidence="1"/>
<dbReference type="EMBL" id="AE015451">
    <property type="protein sequence ID" value="AAN65897.1"/>
    <property type="molecule type" value="Genomic_DNA"/>
</dbReference>
<dbReference type="RefSeq" id="NP_742433.1">
    <property type="nucleotide sequence ID" value="NC_002947.4"/>
</dbReference>
<dbReference type="RefSeq" id="WP_010951636.1">
    <property type="nucleotide sequence ID" value="NZ_CP169744.1"/>
</dbReference>
<dbReference type="SMR" id="Q88R68"/>
<dbReference type="STRING" id="160488.PP_0266"/>
<dbReference type="PaxDb" id="160488-PP_0266"/>
<dbReference type="GeneID" id="83677527"/>
<dbReference type="KEGG" id="ppu:PP_0266"/>
<dbReference type="PATRIC" id="fig|160488.4.peg.284"/>
<dbReference type="eggNOG" id="COG2957">
    <property type="taxonomic scope" value="Bacteria"/>
</dbReference>
<dbReference type="HOGENOM" id="CLU_037682_1_0_6"/>
<dbReference type="OrthoDB" id="9808013at2"/>
<dbReference type="PhylomeDB" id="Q88R68"/>
<dbReference type="BioCyc" id="PPUT160488:G1G01-288-MONOMER"/>
<dbReference type="UniPathway" id="UPA00534">
    <property type="reaction ID" value="UER00285"/>
</dbReference>
<dbReference type="Proteomes" id="UP000000556">
    <property type="component" value="Chromosome"/>
</dbReference>
<dbReference type="GO" id="GO:0047632">
    <property type="term" value="F:agmatine deiminase activity"/>
    <property type="evidence" value="ECO:0007669"/>
    <property type="project" value="UniProtKB-UniRule"/>
</dbReference>
<dbReference type="GO" id="GO:0004668">
    <property type="term" value="F:protein-arginine deiminase activity"/>
    <property type="evidence" value="ECO:0007669"/>
    <property type="project" value="InterPro"/>
</dbReference>
<dbReference type="GO" id="GO:0033388">
    <property type="term" value="P:putrescine biosynthetic process from arginine"/>
    <property type="evidence" value="ECO:0007669"/>
    <property type="project" value="UniProtKB-UniRule"/>
</dbReference>
<dbReference type="Gene3D" id="3.75.10.10">
    <property type="entry name" value="L-arginine/glycine Amidinotransferase, Chain A"/>
    <property type="match status" value="1"/>
</dbReference>
<dbReference type="HAMAP" id="MF_01841">
    <property type="entry name" value="Agmatine_deimin"/>
    <property type="match status" value="1"/>
</dbReference>
<dbReference type="InterPro" id="IPR017754">
    <property type="entry name" value="Agmatine_deiminase"/>
</dbReference>
<dbReference type="InterPro" id="IPR007466">
    <property type="entry name" value="Peptidyl-Arg-deiminase_porph"/>
</dbReference>
<dbReference type="NCBIfam" id="TIGR03380">
    <property type="entry name" value="agmatine_aguA"/>
    <property type="match status" value="1"/>
</dbReference>
<dbReference type="NCBIfam" id="NF010070">
    <property type="entry name" value="PRK13551.1"/>
    <property type="match status" value="1"/>
</dbReference>
<dbReference type="PANTHER" id="PTHR31377">
    <property type="entry name" value="AGMATINE DEIMINASE-RELATED"/>
    <property type="match status" value="1"/>
</dbReference>
<dbReference type="PANTHER" id="PTHR31377:SF0">
    <property type="entry name" value="AGMATINE DEIMINASE-RELATED"/>
    <property type="match status" value="1"/>
</dbReference>
<dbReference type="Pfam" id="PF04371">
    <property type="entry name" value="PAD_porph"/>
    <property type="match status" value="1"/>
</dbReference>
<dbReference type="SUPFAM" id="SSF55909">
    <property type="entry name" value="Pentein"/>
    <property type="match status" value="1"/>
</dbReference>
<feature type="chain" id="PRO_0000194338" description="Agmatine deiminase">
    <location>
        <begin position="1"/>
        <end position="368"/>
    </location>
</feature>
<feature type="active site" description="Amidino-cysteine intermediate" evidence="1">
    <location>
        <position position="357"/>
    </location>
</feature>
<comment type="function">
    <text evidence="1">Mediates the hydrolysis of agmatine into N-carbamoylputrescine in the arginine decarboxylase (ADC) pathway of putrescine biosynthesis, a basic polyamine.</text>
</comment>
<comment type="catalytic activity">
    <reaction evidence="1">
        <text>agmatine + H2O = N-carbamoylputrescine + NH4(+)</text>
        <dbReference type="Rhea" id="RHEA:18037"/>
        <dbReference type="ChEBI" id="CHEBI:15377"/>
        <dbReference type="ChEBI" id="CHEBI:28938"/>
        <dbReference type="ChEBI" id="CHEBI:58145"/>
        <dbReference type="ChEBI" id="CHEBI:58318"/>
        <dbReference type="EC" id="3.5.3.12"/>
    </reaction>
</comment>
<comment type="pathway">
    <text evidence="1">Amine and polyamine biosynthesis; putrescine biosynthesis via agmatine pathway; N-carbamoylputrescine from agmatine: step 1/1.</text>
</comment>
<comment type="subunit">
    <text evidence="1">Homodimer.</text>
</comment>
<comment type="similarity">
    <text evidence="1">Belongs to the agmatine deiminase family.</text>
</comment>
<sequence>MKTLNSTPRADGFHMPAEWAPQTQVWMVWPERPDNWRLGGKPAQAAHVTLAKAIARFEPVTVAVSAGQYENARRQLDQPNIRVVEISNDDAWVRDTGPTFVINDHGEVRGVDWGFNAWGGFDGGLYAPWNRDEELAAKVLEMERCQRYQTEGFVLEGGSIHVDGEGTVITTEECLLNRNRNPHLSREQIEAVLRDHLAVDTVVWLPDGLYNDETDGHVDNFCCYVRPGEVLLAWTDDSNDPNYARCHAAMDVLKNTRDAKGREFIVHKMPIPGPLFATAEECAGVDQVAGSQERDPSVRLAGSYVNFLIVNGGIIAPSFDDPADAEARAILARIFPDHEVVMIPGRELLLGGGNIHCLTQQQPAPVKR</sequence>
<organism>
    <name type="scientific">Pseudomonas putida (strain ATCC 47054 / DSM 6125 / CFBP 8728 / NCIMB 11950 / KT2440)</name>
    <dbReference type="NCBI Taxonomy" id="160488"/>
    <lineage>
        <taxon>Bacteria</taxon>
        <taxon>Pseudomonadati</taxon>
        <taxon>Pseudomonadota</taxon>
        <taxon>Gammaproteobacteria</taxon>
        <taxon>Pseudomonadales</taxon>
        <taxon>Pseudomonadaceae</taxon>
        <taxon>Pseudomonas</taxon>
    </lineage>
</organism>
<keyword id="KW-0378">Hydrolase</keyword>
<keyword id="KW-0620">Polyamine biosynthesis</keyword>
<keyword id="KW-1185">Reference proteome</keyword>
<protein>
    <recommendedName>
        <fullName evidence="1">Agmatine deiminase</fullName>
        <ecNumber evidence="1">3.5.3.12</ecNumber>
    </recommendedName>
    <alternativeName>
        <fullName evidence="1">Agmatine iminohydrolase</fullName>
    </alternativeName>
</protein>
<gene>
    <name evidence="1" type="primary">aguA</name>
    <name type="ordered locus">PP_0266</name>
</gene>
<proteinExistence type="inferred from homology"/>
<evidence type="ECO:0000255" key="1">
    <source>
        <dbReference type="HAMAP-Rule" id="MF_01841"/>
    </source>
</evidence>